<accession>Q9PQ27</accession>
<proteinExistence type="inferred from homology"/>
<keyword id="KW-0648">Protein biosynthesis</keyword>
<keyword id="KW-1185">Reference proteome</keyword>
<keyword id="KW-0808">Transferase</keyword>
<organism>
    <name type="scientific">Ureaplasma parvum serovar 3 (strain ATCC 700970)</name>
    <dbReference type="NCBI Taxonomy" id="273119"/>
    <lineage>
        <taxon>Bacteria</taxon>
        <taxon>Bacillati</taxon>
        <taxon>Mycoplasmatota</taxon>
        <taxon>Mycoplasmoidales</taxon>
        <taxon>Mycoplasmoidaceae</taxon>
        <taxon>Ureaplasma</taxon>
    </lineage>
</organism>
<sequence>MKYKVMFFGTPEIAKIVLETLFNMHEVDLIAVVSQPDAHFDRKKNVIYSPVKQFCLDHNIKLFQPEKIKEIEEEIRILGPDIIITCAFGQFINQGIIDIPKYKIVNIHASLLPKLRGGAPIHYAILNGELKTGITLMHTIKKMDAGNILFQRSLEINDCTTTKSLTLELANLSALMIKEHFLELVKPNLVGIQQDENSVSFAYNIQKDQNIINFDQPAFFINRFVNAMYDKPIAIMQYNGVSIKVYQVKITNQKSCQKPGTIMIFKNQLFVSTQDFDIELLLIQLPNKKPLSPKVLLNGKNPFIN</sequence>
<feature type="chain" id="PRO_0000083078" description="Methionyl-tRNA formyltransferase">
    <location>
        <begin position="1"/>
        <end position="305"/>
    </location>
</feature>
<feature type="binding site" evidence="1">
    <location>
        <begin position="110"/>
        <end position="113"/>
    </location>
    <ligand>
        <name>(6S)-5,6,7,8-tetrahydrofolate</name>
        <dbReference type="ChEBI" id="CHEBI:57453"/>
    </ligand>
</feature>
<comment type="function">
    <text evidence="1">Attaches a formyl group to the free amino group of methionyl-tRNA(fMet). The formyl group appears to play a dual role in the initiator identity of N-formylmethionyl-tRNA by promoting its recognition by IF2 and preventing the misappropriation of this tRNA by the elongation apparatus.</text>
</comment>
<comment type="catalytic activity">
    <reaction evidence="1">
        <text>L-methionyl-tRNA(fMet) + (6R)-10-formyltetrahydrofolate = N-formyl-L-methionyl-tRNA(fMet) + (6S)-5,6,7,8-tetrahydrofolate + H(+)</text>
        <dbReference type="Rhea" id="RHEA:24380"/>
        <dbReference type="Rhea" id="RHEA-COMP:9952"/>
        <dbReference type="Rhea" id="RHEA-COMP:9953"/>
        <dbReference type="ChEBI" id="CHEBI:15378"/>
        <dbReference type="ChEBI" id="CHEBI:57453"/>
        <dbReference type="ChEBI" id="CHEBI:78530"/>
        <dbReference type="ChEBI" id="CHEBI:78844"/>
        <dbReference type="ChEBI" id="CHEBI:195366"/>
        <dbReference type="EC" id="2.1.2.9"/>
    </reaction>
</comment>
<comment type="similarity">
    <text evidence="1 2">Belongs to the Fmt family.</text>
</comment>
<protein>
    <recommendedName>
        <fullName evidence="1">Methionyl-tRNA formyltransferase</fullName>
        <ecNumber evidence="1">2.1.2.9</ecNumber>
    </recommendedName>
</protein>
<gene>
    <name evidence="1" type="primary">fmt</name>
    <name type="ordered locus">UU463</name>
</gene>
<evidence type="ECO:0000255" key="1">
    <source>
        <dbReference type="HAMAP-Rule" id="MF_00182"/>
    </source>
</evidence>
<evidence type="ECO:0000305" key="2"/>
<reference key="1">
    <citation type="journal article" date="2000" name="Nature">
        <title>The complete sequence of the mucosal pathogen Ureaplasma urealyticum.</title>
        <authorList>
            <person name="Glass J.I."/>
            <person name="Lefkowitz E.J."/>
            <person name="Glass J.S."/>
            <person name="Heiner C.R."/>
            <person name="Chen E.Y."/>
            <person name="Cassell G.H."/>
        </authorList>
    </citation>
    <scope>NUCLEOTIDE SEQUENCE [LARGE SCALE GENOMIC DNA]</scope>
    <source>
        <strain>ATCC 700970</strain>
    </source>
</reference>
<dbReference type="EC" id="2.1.2.9" evidence="1"/>
<dbReference type="EMBL" id="AF222894">
    <property type="protein sequence ID" value="AAF30875.1"/>
    <property type="molecule type" value="Genomic_DNA"/>
</dbReference>
<dbReference type="RefSeq" id="WP_010891782.1">
    <property type="nucleotide sequence ID" value="NC_002162.1"/>
</dbReference>
<dbReference type="SMR" id="Q9PQ27"/>
<dbReference type="STRING" id="273119.UU463"/>
<dbReference type="EnsemblBacteria" id="AAF30875">
    <property type="protein sequence ID" value="AAF30875"/>
    <property type="gene ID" value="UU463"/>
</dbReference>
<dbReference type="GeneID" id="29672150"/>
<dbReference type="KEGG" id="uur:UU463"/>
<dbReference type="PATRIC" id="fig|273119.6.peg.479"/>
<dbReference type="eggNOG" id="COG0223">
    <property type="taxonomic scope" value="Bacteria"/>
</dbReference>
<dbReference type="HOGENOM" id="CLU_033347_1_1_14"/>
<dbReference type="OrthoDB" id="9802815at2"/>
<dbReference type="Proteomes" id="UP000000423">
    <property type="component" value="Chromosome"/>
</dbReference>
<dbReference type="GO" id="GO:0005829">
    <property type="term" value="C:cytosol"/>
    <property type="evidence" value="ECO:0007669"/>
    <property type="project" value="TreeGrafter"/>
</dbReference>
<dbReference type="GO" id="GO:0004479">
    <property type="term" value="F:methionyl-tRNA formyltransferase activity"/>
    <property type="evidence" value="ECO:0007669"/>
    <property type="project" value="UniProtKB-UniRule"/>
</dbReference>
<dbReference type="CDD" id="cd08646">
    <property type="entry name" value="FMT_core_Met-tRNA-FMT_N"/>
    <property type="match status" value="1"/>
</dbReference>
<dbReference type="CDD" id="cd08704">
    <property type="entry name" value="Met_tRNA_FMT_C"/>
    <property type="match status" value="1"/>
</dbReference>
<dbReference type="Gene3D" id="3.40.50.12230">
    <property type="match status" value="1"/>
</dbReference>
<dbReference type="HAMAP" id="MF_00182">
    <property type="entry name" value="Formyl_trans"/>
    <property type="match status" value="1"/>
</dbReference>
<dbReference type="InterPro" id="IPR005794">
    <property type="entry name" value="Fmt"/>
</dbReference>
<dbReference type="InterPro" id="IPR005793">
    <property type="entry name" value="Formyl_trans_C"/>
</dbReference>
<dbReference type="InterPro" id="IPR002376">
    <property type="entry name" value="Formyl_transf_N"/>
</dbReference>
<dbReference type="InterPro" id="IPR036477">
    <property type="entry name" value="Formyl_transf_N_sf"/>
</dbReference>
<dbReference type="InterPro" id="IPR011034">
    <property type="entry name" value="Formyl_transferase-like_C_sf"/>
</dbReference>
<dbReference type="InterPro" id="IPR044135">
    <property type="entry name" value="Met-tRNA-FMT_C"/>
</dbReference>
<dbReference type="InterPro" id="IPR041711">
    <property type="entry name" value="Met-tRNA-FMT_N"/>
</dbReference>
<dbReference type="NCBIfam" id="TIGR00460">
    <property type="entry name" value="fmt"/>
    <property type="match status" value="1"/>
</dbReference>
<dbReference type="PANTHER" id="PTHR11138">
    <property type="entry name" value="METHIONYL-TRNA FORMYLTRANSFERASE"/>
    <property type="match status" value="1"/>
</dbReference>
<dbReference type="PANTHER" id="PTHR11138:SF5">
    <property type="entry name" value="METHIONYL-TRNA FORMYLTRANSFERASE, MITOCHONDRIAL"/>
    <property type="match status" value="1"/>
</dbReference>
<dbReference type="Pfam" id="PF02911">
    <property type="entry name" value="Formyl_trans_C"/>
    <property type="match status" value="1"/>
</dbReference>
<dbReference type="Pfam" id="PF00551">
    <property type="entry name" value="Formyl_trans_N"/>
    <property type="match status" value="1"/>
</dbReference>
<dbReference type="SUPFAM" id="SSF50486">
    <property type="entry name" value="FMT C-terminal domain-like"/>
    <property type="match status" value="1"/>
</dbReference>
<dbReference type="SUPFAM" id="SSF53328">
    <property type="entry name" value="Formyltransferase"/>
    <property type="match status" value="1"/>
</dbReference>
<name>FMT_UREPA</name>